<reference key="1">
    <citation type="journal article" date="1999" name="J. Biol. Chem.">
        <title>Magnesium insertion by magnesium chelatase in the biosynthesis of zinc bacteriochlorophyll a in an aerobic acidophilic bacterium Acidiphilium rubrum.</title>
        <authorList>
            <person name="Masuda T."/>
            <person name="Inoue K."/>
            <person name="Masuda M."/>
            <person name="Nagayama M."/>
            <person name="Tamaki A."/>
            <person name="Ohta H."/>
            <person name="Shimada H."/>
            <person name="Takamiya K."/>
        </authorList>
    </citation>
    <scope>NUCLEOTIDE SEQUENCE [GENOMIC DNA]</scope>
    <source>
        <strain>ATCC 35905 / OP</strain>
    </source>
</reference>
<gene>
    <name type="primary">bchI</name>
</gene>
<evidence type="ECO:0000255" key="1"/>
<evidence type="ECO:0000305" key="2"/>
<organism>
    <name type="scientific">Acidiphilium rubrum</name>
    <dbReference type="NCBI Taxonomy" id="526"/>
    <lineage>
        <taxon>Bacteria</taxon>
        <taxon>Pseudomonadati</taxon>
        <taxon>Pseudomonadota</taxon>
        <taxon>Alphaproteobacteria</taxon>
        <taxon>Acetobacterales</taxon>
        <taxon>Acidocellaceae</taxon>
        <taxon>Acidiphilium</taxon>
    </lineage>
</organism>
<comment type="function">
    <text>Involved in bacteriochlorophyll biosynthesis; introduces a magnesium ion into protoporphyrin IX to yield Mg-protoporphyrin IX.</text>
</comment>
<comment type="catalytic activity">
    <reaction>
        <text>protoporphyrin IX + Mg(2+) + ATP + H2O = Mg-protoporphyrin IX + ADP + phosphate + 3 H(+)</text>
        <dbReference type="Rhea" id="RHEA:13961"/>
        <dbReference type="ChEBI" id="CHEBI:15377"/>
        <dbReference type="ChEBI" id="CHEBI:15378"/>
        <dbReference type="ChEBI" id="CHEBI:18420"/>
        <dbReference type="ChEBI" id="CHEBI:30616"/>
        <dbReference type="ChEBI" id="CHEBI:43474"/>
        <dbReference type="ChEBI" id="CHEBI:57306"/>
        <dbReference type="ChEBI" id="CHEBI:60492"/>
        <dbReference type="ChEBI" id="CHEBI:456216"/>
        <dbReference type="EC" id="6.6.1.1"/>
    </reaction>
</comment>
<comment type="pathway">
    <text>Porphyrin-containing compound metabolism; bacteriochlorophyll biosynthesis.</text>
</comment>
<comment type="miscellaneous">
    <text>Substitution of the magnesium ion by a zinc ion in this bacteria has been shown to occur after this step of bacteriochlorophyll biosynthesis.</text>
</comment>
<comment type="similarity">
    <text evidence="2">Belongs to the Mg-chelatase subunits D/I family.</text>
</comment>
<dbReference type="EC" id="6.6.1.1"/>
<dbReference type="EMBL" id="AB017350">
    <property type="protein sequence ID" value="BAA76531.1"/>
    <property type="molecule type" value="Genomic_DNA"/>
</dbReference>
<dbReference type="SMR" id="Q9WXA9"/>
<dbReference type="STRING" id="526.SAMN05421828_10289"/>
<dbReference type="UniPathway" id="UPA00669"/>
<dbReference type="GO" id="GO:0005524">
    <property type="term" value="F:ATP binding"/>
    <property type="evidence" value="ECO:0007669"/>
    <property type="project" value="UniProtKB-KW"/>
</dbReference>
<dbReference type="GO" id="GO:0016887">
    <property type="term" value="F:ATP hydrolysis activity"/>
    <property type="evidence" value="ECO:0007669"/>
    <property type="project" value="InterPro"/>
</dbReference>
<dbReference type="GO" id="GO:0016851">
    <property type="term" value="F:magnesium chelatase activity"/>
    <property type="evidence" value="ECO:0007669"/>
    <property type="project" value="UniProtKB-EC"/>
</dbReference>
<dbReference type="GO" id="GO:0030494">
    <property type="term" value="P:bacteriochlorophyll biosynthetic process"/>
    <property type="evidence" value="ECO:0007669"/>
    <property type="project" value="UniProtKB-UniPathway"/>
</dbReference>
<dbReference type="GO" id="GO:0015979">
    <property type="term" value="P:photosynthesis"/>
    <property type="evidence" value="ECO:0007669"/>
    <property type="project" value="UniProtKB-KW"/>
</dbReference>
<dbReference type="CDD" id="cd00009">
    <property type="entry name" value="AAA"/>
    <property type="match status" value="1"/>
</dbReference>
<dbReference type="Gene3D" id="1.10.8.80">
    <property type="entry name" value="Magnesium chelatase subunit I, C-Terminal domain"/>
    <property type="match status" value="1"/>
</dbReference>
<dbReference type="Gene3D" id="3.40.50.300">
    <property type="entry name" value="P-loop containing nucleotide triphosphate hydrolases"/>
    <property type="match status" value="1"/>
</dbReference>
<dbReference type="InterPro" id="IPR003593">
    <property type="entry name" value="AAA+_ATPase"/>
</dbReference>
<dbReference type="InterPro" id="IPR045006">
    <property type="entry name" value="CHLI-like"/>
</dbReference>
<dbReference type="InterPro" id="IPR041628">
    <property type="entry name" value="ChlI/MoxR_AAA_lid"/>
</dbReference>
<dbReference type="InterPro" id="IPR011775">
    <property type="entry name" value="Mg_chelatase_ATPase-isu"/>
</dbReference>
<dbReference type="InterPro" id="IPR000523">
    <property type="entry name" value="Mg_chelatse_chII-like_cat_dom"/>
</dbReference>
<dbReference type="InterPro" id="IPR027417">
    <property type="entry name" value="P-loop_NTPase"/>
</dbReference>
<dbReference type="NCBIfam" id="TIGR02030">
    <property type="entry name" value="BchI-ChlI"/>
    <property type="match status" value="1"/>
</dbReference>
<dbReference type="PANTHER" id="PTHR32039">
    <property type="entry name" value="MAGNESIUM-CHELATASE SUBUNIT CHLI"/>
    <property type="match status" value="1"/>
</dbReference>
<dbReference type="PANTHER" id="PTHR32039:SF9">
    <property type="entry name" value="MAGNESIUM-CHELATASE SUBUNIT CHLI-2, CHLOROPLASTIC"/>
    <property type="match status" value="1"/>
</dbReference>
<dbReference type="Pfam" id="PF17863">
    <property type="entry name" value="AAA_lid_2"/>
    <property type="match status" value="1"/>
</dbReference>
<dbReference type="Pfam" id="PF01078">
    <property type="entry name" value="Mg_chelatase"/>
    <property type="match status" value="1"/>
</dbReference>
<dbReference type="SMART" id="SM00382">
    <property type="entry name" value="AAA"/>
    <property type="match status" value="1"/>
</dbReference>
<dbReference type="SUPFAM" id="SSF52540">
    <property type="entry name" value="P-loop containing nucleoside triphosphate hydrolases"/>
    <property type="match status" value="1"/>
</dbReference>
<name>BCHI_ACIRU</name>
<keyword id="KW-0067">ATP-binding</keyword>
<keyword id="KW-0077">Bacteriochlorophyll biosynthesis</keyword>
<keyword id="KW-0149">Chlorophyll biosynthesis</keyword>
<keyword id="KW-0436">Ligase</keyword>
<keyword id="KW-0547">Nucleotide-binding</keyword>
<keyword id="KW-0602">Photosynthesis</keyword>
<sequence>MALYPFTAIVGQTEMIRAMLIATVEPTLGGVLAFGDRGTGKSTAVRALAALLPTMRAVAGCRYHCDPAARSALCPECRNRRAAGRLASERVRIPVVDLPLGATEDRVVGALDLERALADGVKAFEPGLLARAHRGFLYIDEINLLEDHLVDLLLDVAASGENVVEREGLSLRHPARFVLIGSGNPEEGELRPQLLDRFGLCVEVKTPTDLDQRIEVVRRRDAFEHDQAGFTRRFAADEAALRRQLVTAMKLLPLVSVPEAILRLAAKLCIELGTDGLRGELTLLRAARAEAALEGDTVVTESHLRAVAPAALRHRLRRDPLDESLAGARVERAMAALFSQAAIAR</sequence>
<protein>
    <recommendedName>
        <fullName>Magnesium-chelatase 38 kDa subunit</fullName>
        <ecNumber>6.6.1.1</ecNumber>
    </recommendedName>
    <alternativeName>
        <fullName>Mg-protoporphyrin IX chelatase</fullName>
    </alternativeName>
</protein>
<feature type="chain" id="PRO_0000206856" description="Magnesium-chelatase 38 kDa subunit">
    <location>
        <begin position="1"/>
        <end position="345"/>
    </location>
</feature>
<feature type="binding site" evidence="1">
    <location>
        <begin position="35"/>
        <end position="42"/>
    </location>
    <ligand>
        <name>ATP</name>
        <dbReference type="ChEBI" id="CHEBI:30616"/>
    </ligand>
</feature>
<accession>Q9WXA9</accession>
<proteinExistence type="inferred from homology"/>